<keyword id="KW-0002">3D-structure</keyword>
<keyword id="KW-0067">ATP-binding</keyword>
<keyword id="KW-0131">Cell cycle</keyword>
<keyword id="KW-0132">Cell division</keyword>
<keyword id="KW-0963">Cytoplasm</keyword>
<keyword id="KW-0418">Kinase</keyword>
<keyword id="KW-0460">Magnesium</keyword>
<keyword id="KW-0479">Metal-binding</keyword>
<keyword id="KW-0498">Mitosis</keyword>
<keyword id="KW-0547">Nucleotide-binding</keyword>
<keyword id="KW-0597">Phosphoprotein</keyword>
<keyword id="KW-0723">Serine/threonine-protein kinase</keyword>
<keyword id="KW-0808">Transferase</keyword>
<dbReference type="EC" id="2.7.11.22" evidence="7 9"/>
<dbReference type="EC" id="2.7.11.23" evidence="4"/>
<dbReference type="EMBL" id="X61921">
    <property type="protein sequence ID" value="CAA43923.1"/>
    <property type="molecule type" value="Genomic_DNA"/>
</dbReference>
<dbReference type="PIR" id="S42566">
    <property type="entry name" value="S42566"/>
</dbReference>
<dbReference type="PDB" id="1OB3">
    <property type="method" value="X-ray"/>
    <property type="resolution" value="1.90 A"/>
    <property type="chains" value="A/B=1-288"/>
</dbReference>
<dbReference type="PDB" id="1V0B">
    <property type="method" value="X-ray"/>
    <property type="resolution" value="2.20 A"/>
    <property type="chains" value="A/B=1-288"/>
</dbReference>
<dbReference type="PDB" id="1V0O">
    <property type="method" value="X-ray"/>
    <property type="resolution" value="1.90 A"/>
    <property type="chains" value="A/B=1-288"/>
</dbReference>
<dbReference type="PDB" id="1V0P">
    <property type="method" value="X-ray"/>
    <property type="resolution" value="2.00 A"/>
    <property type="chains" value="A/B=1-288"/>
</dbReference>
<dbReference type="PDBsum" id="1OB3"/>
<dbReference type="PDBsum" id="1V0B"/>
<dbReference type="PDBsum" id="1V0O"/>
<dbReference type="PDBsum" id="1V0P"/>
<dbReference type="SMR" id="Q07785"/>
<dbReference type="ChEMBL" id="CHEMBL2189145"/>
<dbReference type="DrugBank" id="DB02519">
    <property type="generic name" value="Indirubin-5-sulphonate"/>
</dbReference>
<dbReference type="DrugBank" id="DB02733">
    <property type="generic name" value="Purvalanol"/>
</dbReference>
<dbReference type="BRENDA" id="2.7.11.22">
    <property type="organism ID" value="4889"/>
</dbReference>
<dbReference type="EvolutionaryTrace" id="Q07785"/>
<dbReference type="GO" id="GO:0005737">
    <property type="term" value="C:cytoplasm"/>
    <property type="evidence" value="ECO:0007669"/>
    <property type="project" value="UniProtKB-SubCell"/>
</dbReference>
<dbReference type="GO" id="GO:0005634">
    <property type="term" value="C:nucleus"/>
    <property type="evidence" value="ECO:0007669"/>
    <property type="project" value="TreeGrafter"/>
</dbReference>
<dbReference type="GO" id="GO:0005524">
    <property type="term" value="F:ATP binding"/>
    <property type="evidence" value="ECO:0007669"/>
    <property type="project" value="UniProtKB-KW"/>
</dbReference>
<dbReference type="GO" id="GO:0004693">
    <property type="term" value="F:cyclin-dependent protein serine/threonine kinase activity"/>
    <property type="evidence" value="ECO:0007669"/>
    <property type="project" value="UniProtKB-EC"/>
</dbReference>
<dbReference type="GO" id="GO:0046872">
    <property type="term" value="F:metal ion binding"/>
    <property type="evidence" value="ECO:0007669"/>
    <property type="project" value="UniProtKB-KW"/>
</dbReference>
<dbReference type="GO" id="GO:0106310">
    <property type="term" value="F:protein serine kinase activity"/>
    <property type="evidence" value="ECO:0007669"/>
    <property type="project" value="RHEA"/>
</dbReference>
<dbReference type="GO" id="GO:0008353">
    <property type="term" value="F:RNA polymerase II CTD heptapeptide repeat kinase activity"/>
    <property type="evidence" value="ECO:0007669"/>
    <property type="project" value="UniProtKB-EC"/>
</dbReference>
<dbReference type="GO" id="GO:0051301">
    <property type="term" value="P:cell division"/>
    <property type="evidence" value="ECO:0007669"/>
    <property type="project" value="UniProtKB-KW"/>
</dbReference>
<dbReference type="CDD" id="cd07829">
    <property type="entry name" value="STKc_CDK_like"/>
    <property type="match status" value="1"/>
</dbReference>
<dbReference type="FunFam" id="3.30.200.20:FF:000396">
    <property type="entry name" value="Cdc2-related kinase 2, putative"/>
    <property type="match status" value="1"/>
</dbReference>
<dbReference type="FunFam" id="1.10.510.10:FF:000184">
    <property type="entry name" value="cyclin-dependent kinase 5 homolog"/>
    <property type="match status" value="1"/>
</dbReference>
<dbReference type="Gene3D" id="3.30.200.20">
    <property type="entry name" value="Phosphorylase Kinase, domain 1"/>
    <property type="match status" value="1"/>
</dbReference>
<dbReference type="Gene3D" id="1.10.510.10">
    <property type="entry name" value="Transferase(Phosphotransferase) domain 1"/>
    <property type="match status" value="1"/>
</dbReference>
<dbReference type="InterPro" id="IPR050108">
    <property type="entry name" value="CDK"/>
</dbReference>
<dbReference type="InterPro" id="IPR011009">
    <property type="entry name" value="Kinase-like_dom_sf"/>
</dbReference>
<dbReference type="InterPro" id="IPR000719">
    <property type="entry name" value="Prot_kinase_dom"/>
</dbReference>
<dbReference type="InterPro" id="IPR017441">
    <property type="entry name" value="Protein_kinase_ATP_BS"/>
</dbReference>
<dbReference type="InterPro" id="IPR008271">
    <property type="entry name" value="Ser/Thr_kinase_AS"/>
</dbReference>
<dbReference type="PANTHER" id="PTHR24056">
    <property type="entry name" value="CELL DIVISION PROTEIN KINASE"/>
    <property type="match status" value="1"/>
</dbReference>
<dbReference type="PANTHER" id="PTHR24056:SF46">
    <property type="entry name" value="CYCLIN-DEPENDENT KINASE 5"/>
    <property type="match status" value="1"/>
</dbReference>
<dbReference type="Pfam" id="PF00069">
    <property type="entry name" value="Pkinase"/>
    <property type="match status" value="1"/>
</dbReference>
<dbReference type="SMART" id="SM00220">
    <property type="entry name" value="S_TKc"/>
    <property type="match status" value="1"/>
</dbReference>
<dbReference type="SUPFAM" id="SSF56112">
    <property type="entry name" value="Protein kinase-like (PK-like)"/>
    <property type="match status" value="1"/>
</dbReference>
<dbReference type="PROSITE" id="PS00107">
    <property type="entry name" value="PROTEIN_KINASE_ATP"/>
    <property type="match status" value="1"/>
</dbReference>
<dbReference type="PROSITE" id="PS50011">
    <property type="entry name" value="PROTEIN_KINASE_DOM"/>
    <property type="match status" value="1"/>
</dbReference>
<dbReference type="PROSITE" id="PS00108">
    <property type="entry name" value="PROTEIN_KINASE_ST"/>
    <property type="match status" value="1"/>
</dbReference>
<proteinExistence type="evidence at protein level"/>
<gene>
    <name evidence="1" type="primary">CRK2</name>
    <name evidence="10" type="synonym">PK5</name>
</gene>
<feature type="chain" id="PRO_0000085742" description="Cyclin-dependent kinase 2 homolog">
    <location>
        <begin position="1"/>
        <end position="288"/>
    </location>
</feature>
<feature type="domain" description="Protein kinase" evidence="5">
    <location>
        <begin position="4"/>
        <end position="284"/>
    </location>
</feature>
<feature type="active site" description="Proton acceptor" evidence="5 6">
    <location>
        <position position="125"/>
    </location>
</feature>
<feature type="binding site" evidence="5">
    <location>
        <begin position="10"/>
        <end position="18"/>
    </location>
    <ligand>
        <name>ATP</name>
        <dbReference type="ChEBI" id="CHEBI:30616"/>
    </ligand>
</feature>
<feature type="binding site" evidence="5">
    <location>
        <position position="32"/>
    </location>
    <ligand>
        <name>ATP</name>
        <dbReference type="ChEBI" id="CHEBI:30616"/>
    </ligand>
</feature>
<feature type="modified residue" description="Phosphothreonine" evidence="3">
    <location>
        <position position="14"/>
    </location>
</feature>
<feature type="modified residue" description="Phosphotyrosine" evidence="3">
    <location>
        <position position="15"/>
    </location>
</feature>
<feature type="modified residue" description="Phosphothreonine" evidence="3">
    <location>
        <position position="158"/>
    </location>
</feature>
<feature type="mutagenesis site" description="Loss of catalytic activity." evidence="9">
    <original>K</original>
    <variation>R</variation>
    <location>
        <position position="32"/>
    </location>
</feature>
<feature type="mutagenesis site" description="Abolishes phosphorylation. No effect on catalytic activity." evidence="7">
    <original>T</original>
    <variation>A</variation>
    <location>
        <position position="158"/>
    </location>
</feature>
<feature type="mutagenesis site" description="Phosphomimetic mutant. Increases catalytic activity." evidence="9">
    <original>T</original>
    <variation>D</variation>
    <location>
        <position position="158"/>
    </location>
</feature>
<feature type="mutagenesis site" description="Abolishes phosphorylation. Loss of catalytic activity." evidence="9">
    <original>T</original>
    <variation>V</variation>
    <location>
        <position position="158"/>
    </location>
</feature>
<feature type="strand" evidence="16">
    <location>
        <begin position="3"/>
        <end position="13"/>
    </location>
</feature>
<feature type="strand" evidence="16">
    <location>
        <begin position="16"/>
        <end position="23"/>
    </location>
</feature>
<feature type="strand" evidence="16">
    <location>
        <begin position="28"/>
        <end position="34"/>
    </location>
</feature>
<feature type="helix" evidence="16">
    <location>
        <begin position="39"/>
        <end position="41"/>
    </location>
</feature>
<feature type="helix" evidence="16">
    <location>
        <begin position="45"/>
        <end position="52"/>
    </location>
</feature>
<feature type="helix" evidence="16">
    <location>
        <begin position="53"/>
        <end position="56"/>
    </location>
</feature>
<feature type="strand" evidence="16">
    <location>
        <begin position="65"/>
        <end position="70"/>
    </location>
</feature>
<feature type="strand" evidence="16">
    <location>
        <begin position="75"/>
        <end position="80"/>
    </location>
</feature>
<feature type="strand" evidence="16">
    <location>
        <begin position="83"/>
        <end position="85"/>
    </location>
</feature>
<feature type="helix" evidence="16">
    <location>
        <begin position="86"/>
        <end position="91"/>
    </location>
</feature>
<feature type="strand" evidence="17">
    <location>
        <begin position="93"/>
        <end position="96"/>
    </location>
</feature>
<feature type="helix" evidence="16">
    <location>
        <begin position="99"/>
        <end position="118"/>
    </location>
</feature>
<feature type="helix" evidence="16">
    <location>
        <begin position="128"/>
        <end position="130"/>
    </location>
</feature>
<feature type="strand" evidence="16">
    <location>
        <begin position="131"/>
        <end position="133"/>
    </location>
</feature>
<feature type="strand" evidence="16">
    <location>
        <begin position="139"/>
        <end position="141"/>
    </location>
</feature>
<feature type="helix" evidence="16">
    <location>
        <begin position="146"/>
        <end position="150"/>
    </location>
</feature>
<feature type="strand" evidence="17">
    <location>
        <begin position="152"/>
        <end position="155"/>
    </location>
</feature>
<feature type="turn" evidence="17">
    <location>
        <begin position="159"/>
        <end position="161"/>
    </location>
</feature>
<feature type="helix" evidence="16">
    <location>
        <begin position="169"/>
        <end position="172"/>
    </location>
</feature>
<feature type="helix" evidence="16">
    <location>
        <begin position="181"/>
        <end position="196"/>
    </location>
</feature>
<feature type="helix" evidence="16">
    <location>
        <begin position="206"/>
        <end position="217"/>
    </location>
</feature>
<feature type="turn" evidence="16">
    <location>
        <begin position="222"/>
        <end position="224"/>
    </location>
</feature>
<feature type="helix" evidence="16">
    <location>
        <begin position="228"/>
        <end position="230"/>
    </location>
</feature>
<feature type="helix" evidence="16">
    <location>
        <begin position="246"/>
        <end position="248"/>
    </location>
</feature>
<feature type="helix" evidence="16">
    <location>
        <begin position="255"/>
        <end position="264"/>
    </location>
</feature>
<feature type="turn" evidence="16">
    <location>
        <begin position="269"/>
        <end position="271"/>
    </location>
</feature>
<feature type="helix" evidence="16">
    <location>
        <begin position="275"/>
        <end position="279"/>
    </location>
</feature>
<feature type="helix" evidence="16">
    <location>
        <begin position="282"/>
        <end position="285"/>
    </location>
</feature>
<protein>
    <recommendedName>
        <fullName evidence="11">Cyclin-dependent kinase 2 homolog</fullName>
        <ecNumber evidence="7 9">2.7.11.22</ecNumber>
        <ecNumber evidence="4">2.7.11.23</ecNumber>
    </recommendedName>
    <alternativeName>
        <fullName evidence="10">Cell division control protein 2 homolog</fullName>
    </alternativeName>
    <alternativeName>
        <fullName evidence="10">Protein kinase 5</fullName>
        <shortName evidence="10">PfPK5</shortName>
    </alternativeName>
    <alternativeName>
        <fullName evidence="1">cdc2-related kinase 2</fullName>
    </alternativeName>
</protein>
<reference key="1">
    <citation type="journal article" date="1994" name="Eur. J. Biochem.">
        <title>Isolation and expression of a gene specifying a cdc2-like protein kinase from the human malaria parasite Plasmodium falciparum.</title>
        <authorList>
            <person name="Ross-Macdonald P.B."/>
            <person name="Graeser R."/>
            <person name="Kappes B."/>
            <person name="Franklin R."/>
            <person name="Williamson D.H."/>
        </authorList>
    </citation>
    <scope>NUCLEOTIDE SEQUENCE [GENOMIC DNA]</scope>
    <scope>DEVELOPMENTAL STAGE</scope>
</reference>
<reference key="2">
    <citation type="journal article" date="1996" name="Mol. Biochem. Parasitol.">
        <title>Mechanisms of activation of the cdc2-related kinase PfPK5 from Plasmodium falciparum.</title>
        <authorList>
            <person name="Graeser R."/>
            <person name="Franklin R.M."/>
            <person name="Kappes B."/>
        </authorList>
    </citation>
    <scope>FUNCTION</scope>
    <scope>CATALYTIC ACTIVITY</scope>
    <scope>COFACTOR</scope>
    <scope>MUTAGENESIS OF LYS-32 AND THR-158</scope>
</reference>
<reference evidence="12 13 14 15" key="3">
    <citation type="journal article" date="2003" name="Structure">
        <title>Structures of P. falciparum PfPK5 test the CDK regulation paradigm and suggest mechanisms of small molecule inhibition.</title>
        <authorList>
            <person name="Holton S."/>
            <person name="Merckx A."/>
            <person name="Burgess D."/>
            <person name="Doerig C."/>
            <person name="Noble M."/>
            <person name="Endicott J."/>
        </authorList>
    </citation>
    <scope>X-RAY CRYSTALLOGRAPHY (1.90 ANGSTROMS) IN COMPLEX WITH INHIBITORS</scope>
    <scope>FUNCTION</scope>
    <scope>CATALYTIC ACTIVITY</scope>
    <scope>MUTAGENESIS OF THR-158</scope>
</reference>
<organism>
    <name type="scientific">Plasmodium falciparum (isolate K1 / Thailand)</name>
    <dbReference type="NCBI Taxonomy" id="5839"/>
    <lineage>
        <taxon>Eukaryota</taxon>
        <taxon>Sar</taxon>
        <taxon>Alveolata</taxon>
        <taxon>Apicomplexa</taxon>
        <taxon>Aconoidasida</taxon>
        <taxon>Haemosporida</taxon>
        <taxon>Plasmodiidae</taxon>
        <taxon>Plasmodium</taxon>
        <taxon>Plasmodium (Laverania)</taxon>
    </lineage>
</organism>
<sequence>MEKYHGLEKIGEGTYGVVYKAQNNYGETFALKKIRLEKEDEGIPSTTIREISILKELKHSNIVKLYDVIHTKKRLVLVFEHLDQDLKKLLDVCEGGLESVTAKSFLLQLLNGIAYCHDRRVLHRDLKPQNLLINREGELKIADFGLARAFGIPVRKYTHEVVTLWYRAPDVLMGSKKYSTTIDIWSVGCIFAEMVNGTPLFPGVSEADQLMRIFRILGTPNSKNWPNVTELPKYDPNFTVYEPLPWESFLKGLDESGIDLLSKMLKLDPNQRITAKQALEHAYFKENN</sequence>
<name>CDK2H_PLAFK</name>
<evidence type="ECO:0000250" key="1">
    <source>
        <dbReference type="UniProtKB" id="O96821"/>
    </source>
</evidence>
<evidence type="ECO:0000250" key="2">
    <source>
        <dbReference type="UniProtKB" id="P04551"/>
    </source>
</evidence>
<evidence type="ECO:0000250" key="3">
    <source>
        <dbReference type="UniProtKB" id="P24941"/>
    </source>
</evidence>
<evidence type="ECO:0000250" key="4">
    <source>
        <dbReference type="UniProtKB" id="P61075"/>
    </source>
</evidence>
<evidence type="ECO:0000255" key="5">
    <source>
        <dbReference type="PROSITE-ProRule" id="PRU00159"/>
    </source>
</evidence>
<evidence type="ECO:0000255" key="6">
    <source>
        <dbReference type="PROSITE-ProRule" id="PRU10027"/>
    </source>
</evidence>
<evidence type="ECO:0000269" key="7">
    <source>
    </source>
</evidence>
<evidence type="ECO:0000269" key="8">
    <source>
    </source>
</evidence>
<evidence type="ECO:0000269" key="9">
    <source>
    </source>
</evidence>
<evidence type="ECO:0000303" key="10">
    <source>
    </source>
</evidence>
<evidence type="ECO:0000305" key="11"/>
<evidence type="ECO:0007744" key="12">
    <source>
        <dbReference type="PDB" id="1OB3"/>
    </source>
</evidence>
<evidence type="ECO:0007744" key="13">
    <source>
        <dbReference type="PDB" id="1V0B"/>
    </source>
</evidence>
<evidence type="ECO:0007744" key="14">
    <source>
        <dbReference type="PDB" id="1V0O"/>
    </source>
</evidence>
<evidence type="ECO:0007744" key="15">
    <source>
        <dbReference type="PDB" id="1V0P"/>
    </source>
</evidence>
<evidence type="ECO:0007829" key="16">
    <source>
        <dbReference type="PDB" id="1OB3"/>
    </source>
</evidence>
<evidence type="ECO:0007829" key="17">
    <source>
        <dbReference type="PDB" id="1V0O"/>
    </source>
</evidence>
<comment type="function">
    <text evidence="2 7 9">Serine/threonine-protein kinase (PubMed:14604523, PubMed:8844681). Involved in the control of the cell cycle (By similarity). Required for entry into S-phase and mitosis (By similarity). Probable component of the kinase complex that phosphorylates the repetitive C-terminus of RNA polymerase II (By similarity). In schizonts, phosphorylates ORC1 resulting in its dissociation from DNA, relocalization to the cytoplasm and likely its degradation (By similarity).</text>
</comment>
<comment type="catalytic activity">
    <reaction evidence="7 9">
        <text>L-seryl-[protein] + ATP = O-phospho-L-seryl-[protein] + ADP + H(+)</text>
        <dbReference type="Rhea" id="RHEA:17989"/>
        <dbReference type="Rhea" id="RHEA-COMP:9863"/>
        <dbReference type="Rhea" id="RHEA-COMP:11604"/>
        <dbReference type="ChEBI" id="CHEBI:15378"/>
        <dbReference type="ChEBI" id="CHEBI:29999"/>
        <dbReference type="ChEBI" id="CHEBI:30616"/>
        <dbReference type="ChEBI" id="CHEBI:83421"/>
        <dbReference type="ChEBI" id="CHEBI:456216"/>
        <dbReference type="EC" id="2.7.11.22"/>
    </reaction>
</comment>
<comment type="catalytic activity">
    <reaction evidence="7 9">
        <text>L-threonyl-[protein] + ATP = O-phospho-L-threonyl-[protein] + ADP + H(+)</text>
        <dbReference type="Rhea" id="RHEA:46608"/>
        <dbReference type="Rhea" id="RHEA-COMP:11060"/>
        <dbReference type="Rhea" id="RHEA-COMP:11605"/>
        <dbReference type="ChEBI" id="CHEBI:15378"/>
        <dbReference type="ChEBI" id="CHEBI:30013"/>
        <dbReference type="ChEBI" id="CHEBI:30616"/>
        <dbReference type="ChEBI" id="CHEBI:61977"/>
        <dbReference type="ChEBI" id="CHEBI:456216"/>
        <dbReference type="EC" id="2.7.11.22"/>
    </reaction>
</comment>
<comment type="catalytic activity">
    <reaction evidence="4">
        <text>[DNA-directed RNA polymerase] + ATP = phospho-[DNA-directed RNA polymerase] + ADP + H(+)</text>
        <dbReference type="Rhea" id="RHEA:10216"/>
        <dbReference type="Rhea" id="RHEA-COMP:11321"/>
        <dbReference type="Rhea" id="RHEA-COMP:11322"/>
        <dbReference type="ChEBI" id="CHEBI:15378"/>
        <dbReference type="ChEBI" id="CHEBI:30616"/>
        <dbReference type="ChEBI" id="CHEBI:43176"/>
        <dbReference type="ChEBI" id="CHEBI:68546"/>
        <dbReference type="ChEBI" id="CHEBI:456216"/>
        <dbReference type="EC" id="2.7.11.23"/>
    </reaction>
</comment>
<comment type="cofactor">
    <cofactor evidence="9">
        <name>Mg(2+)</name>
        <dbReference type="ChEBI" id="CHEBI:18420"/>
    </cofactor>
</comment>
<comment type="activity regulation">
    <text evidence="3 4">Phosphorylation at Thr-14 or Tyr-15 inactivates the enzyme, while phosphorylation at Thr-158 activates it (By similarity). Activated by cyclin cyc-1 in vitro (By similarity). Activated by cyclin cyc-3 in vitro (By similarity).</text>
</comment>
<comment type="subunit">
    <text evidence="4">May form a complex composed of at least the catalytic subunit CRK2 and a cyclin.</text>
</comment>
<comment type="subcellular location">
    <subcellularLocation>
        <location evidence="2">Cytoplasm</location>
    </subcellularLocation>
</comment>
<comment type="developmental stage">
    <text evidence="8">Expressed during the asexual blood stage including in trophozoites and schizonts.</text>
</comment>
<comment type="PTM">
    <text evidence="4">Autophosphorylates in presence of cyclin cyc-1 but not in presence of cyclin cyc-3.</text>
</comment>
<comment type="similarity">
    <text evidence="11">Belongs to the protein kinase superfamily. CMGC Ser/Thr protein kinase family. CDC2/CDKX subfamily.</text>
</comment>
<accession>Q07785</accession>